<feature type="initiator methionine" description="Removed; by host" evidence="1">
    <location>
        <position position="1"/>
    </location>
</feature>
<feature type="chain" id="PRO_0000261269" description="Gag-Pol polyprotein">
    <location>
        <begin position="2"/>
        <end position="1439"/>
    </location>
</feature>
<feature type="chain" id="PRO_0000042344" description="Matrix protein p17" evidence="1">
    <location>
        <begin position="2"/>
        <end position="132"/>
    </location>
</feature>
<feature type="chain" id="PRO_0000042345" description="Capsid protein p24" evidence="1">
    <location>
        <begin position="133"/>
        <end position="363"/>
    </location>
</feature>
<feature type="peptide" id="PRO_0000042346" description="Spacer peptide 1" evidence="1">
    <location>
        <begin position="364"/>
        <end position="377"/>
    </location>
</feature>
<feature type="chain" id="PRO_0000042347" description="Nucleocapsid protein p7" evidence="1">
    <location>
        <begin position="378"/>
        <end position="432"/>
    </location>
</feature>
<feature type="peptide" id="PRO_0000246718" description="Transframe peptide" evidence="8">
    <location>
        <begin position="433"/>
        <end position="440"/>
    </location>
</feature>
<feature type="chain" id="PRO_0000042348" description="p6-pol" evidence="8">
    <location>
        <begin position="441"/>
        <end position="492"/>
    </location>
</feature>
<feature type="chain" id="PRO_0000038654" description="Protease" evidence="1">
    <location>
        <begin position="493"/>
        <end position="591"/>
    </location>
</feature>
<feature type="chain" id="PRO_0000042349" description="Reverse transcriptase/ribonuclease H" evidence="1">
    <location>
        <begin position="592"/>
        <end position="1151"/>
    </location>
</feature>
<feature type="chain" id="PRO_0000042350" description="p51 RT" evidence="1">
    <location>
        <begin position="592"/>
        <end position="1031"/>
    </location>
</feature>
<feature type="chain" id="PRO_0000042351" description="p15" evidence="1">
    <location>
        <begin position="1032"/>
        <end position="1151"/>
    </location>
</feature>
<feature type="chain" id="PRO_0000042352" description="Integrase" evidence="1">
    <location>
        <begin position="1152"/>
        <end position="1439"/>
    </location>
</feature>
<feature type="domain" description="Peptidase A2" evidence="10">
    <location>
        <begin position="512"/>
        <end position="581"/>
    </location>
</feature>
<feature type="domain" description="Reverse transcriptase" evidence="11">
    <location>
        <begin position="635"/>
        <end position="825"/>
    </location>
</feature>
<feature type="domain" description="RNase H type-1" evidence="12">
    <location>
        <begin position="1025"/>
        <end position="1148"/>
    </location>
</feature>
<feature type="domain" description="Integrase catalytic" evidence="14">
    <location>
        <begin position="1205"/>
        <end position="1355"/>
    </location>
</feature>
<feature type="zinc finger region" description="CCHC-type 1" evidence="9">
    <location>
        <begin position="390"/>
        <end position="407"/>
    </location>
</feature>
<feature type="zinc finger region" description="CCHC-type 2" evidence="9">
    <location>
        <begin position="411"/>
        <end position="428"/>
    </location>
</feature>
<feature type="zinc finger region" description="Integrase-type" evidence="13">
    <location>
        <begin position="1154"/>
        <end position="1195"/>
    </location>
</feature>
<feature type="DNA-binding region" description="Integrase-type" evidence="15">
    <location>
        <begin position="1374"/>
        <end position="1421"/>
    </location>
</feature>
<feature type="region of interest" description="Interaction with Gp41" evidence="7">
    <location>
        <begin position="7"/>
        <end position="31"/>
    </location>
</feature>
<feature type="region of interest" description="Interaction with host CALM1" evidence="5">
    <location>
        <begin position="8"/>
        <end position="43"/>
    </location>
</feature>
<feature type="region of interest" description="Interaction with host AP3D1" evidence="7">
    <location>
        <begin position="12"/>
        <end position="19"/>
    </location>
</feature>
<feature type="region of interest" description="Interaction with membrane phosphatidylinositol 4,5-bisphosphate and RNA" evidence="7">
    <location>
        <begin position="14"/>
        <end position="33"/>
    </location>
</feature>
<feature type="region of interest" description="Interaction with membrane phosphatidylinositol 4,5-bisphosphate" evidence="7">
    <location>
        <begin position="73"/>
        <end position="77"/>
    </location>
</feature>
<feature type="region of interest" description="Disordered" evidence="17">
    <location>
        <begin position="106"/>
        <end position="128"/>
    </location>
</feature>
<feature type="region of interest" description="Interaction with human PPIA/CYPA and NUP153" evidence="7">
    <location>
        <begin position="189"/>
        <end position="227"/>
    </location>
</feature>
<feature type="region of interest" description="Dimerization/Multimerization of capsid protein p24" evidence="5">
    <location>
        <begin position="277"/>
        <end position="363"/>
    </location>
</feature>
<feature type="region of interest" description="Dimerization of protease" evidence="5">
    <location>
        <begin position="493"/>
        <end position="497"/>
    </location>
</feature>
<feature type="region of interest" description="Dimerization of protease" evidence="5">
    <location>
        <begin position="541"/>
        <end position="547"/>
    </location>
</feature>
<feature type="region of interest" description="Dimerization of protease" evidence="5">
    <location>
        <begin position="580"/>
        <end position="592"/>
    </location>
</feature>
<feature type="region of interest" description="RT 'primer grip'" evidence="1">
    <location>
        <begin position="818"/>
        <end position="826"/>
    </location>
</feature>
<feature type="short sequence motif" description="Nuclear export signal" evidence="1">
    <location>
        <begin position="16"/>
        <end position="22"/>
    </location>
</feature>
<feature type="short sequence motif" description="Nuclear localization signal" evidence="1">
    <location>
        <begin position="26"/>
        <end position="32"/>
    </location>
</feature>
<feature type="short sequence motif" description="Tryptophan repeat motif" evidence="1">
    <location>
        <begin position="989"/>
        <end position="1005"/>
    </location>
</feature>
<feature type="active site" description="For protease activity; shared with dimeric partner" evidence="16">
    <location>
        <position position="517"/>
    </location>
</feature>
<feature type="binding site" evidence="1">
    <location>
        <position position="701"/>
    </location>
    <ligand>
        <name>Mg(2+)</name>
        <dbReference type="ChEBI" id="CHEBI:18420"/>
        <label>1</label>
        <note>catalytic; for reverse transcriptase activity</note>
    </ligand>
</feature>
<feature type="binding site" evidence="1">
    <location>
        <position position="776"/>
    </location>
    <ligand>
        <name>Mg(2+)</name>
        <dbReference type="ChEBI" id="CHEBI:18420"/>
        <label>1</label>
        <note>catalytic; for reverse transcriptase activity</note>
    </ligand>
</feature>
<feature type="binding site" evidence="1">
    <location>
        <position position="777"/>
    </location>
    <ligand>
        <name>Mg(2+)</name>
        <dbReference type="ChEBI" id="CHEBI:18420"/>
        <label>1</label>
        <note>catalytic; for reverse transcriptase activity</note>
    </ligand>
</feature>
<feature type="binding site" evidence="1">
    <location>
        <position position="1034"/>
    </location>
    <ligand>
        <name>Mg(2+)</name>
        <dbReference type="ChEBI" id="CHEBI:18420"/>
        <label>2</label>
        <note>catalytic; for RNase H activity</note>
    </ligand>
</feature>
<feature type="binding site" evidence="1">
    <location>
        <position position="1069"/>
    </location>
    <ligand>
        <name>Mg(2+)</name>
        <dbReference type="ChEBI" id="CHEBI:18420"/>
        <label>2</label>
        <note>catalytic; for RNase H activity</note>
    </ligand>
</feature>
<feature type="binding site" evidence="1">
    <location>
        <position position="1089"/>
    </location>
    <ligand>
        <name>Mg(2+)</name>
        <dbReference type="ChEBI" id="CHEBI:18420"/>
        <label>2</label>
        <note>catalytic; for RNase H activity</note>
    </ligand>
</feature>
<feature type="binding site" evidence="1">
    <location>
        <position position="1140"/>
    </location>
    <ligand>
        <name>Mg(2+)</name>
        <dbReference type="ChEBI" id="CHEBI:18420"/>
        <label>2</label>
        <note>catalytic; for RNase H activity</note>
    </ligand>
</feature>
<feature type="binding site" evidence="13">
    <location>
        <position position="1163"/>
    </location>
    <ligand>
        <name>Zn(2+)</name>
        <dbReference type="ChEBI" id="CHEBI:29105"/>
    </ligand>
</feature>
<feature type="binding site" evidence="13">
    <location>
        <position position="1167"/>
    </location>
    <ligand>
        <name>Zn(2+)</name>
        <dbReference type="ChEBI" id="CHEBI:29105"/>
    </ligand>
</feature>
<feature type="binding site" evidence="13">
    <location>
        <position position="1191"/>
    </location>
    <ligand>
        <name>Zn(2+)</name>
        <dbReference type="ChEBI" id="CHEBI:29105"/>
    </ligand>
</feature>
<feature type="binding site" evidence="13">
    <location>
        <position position="1194"/>
    </location>
    <ligand>
        <name>Zn(2+)</name>
        <dbReference type="ChEBI" id="CHEBI:29105"/>
    </ligand>
</feature>
<feature type="binding site" evidence="1">
    <location>
        <position position="1215"/>
    </location>
    <ligand>
        <name>Mg(2+)</name>
        <dbReference type="ChEBI" id="CHEBI:18420"/>
        <label>3</label>
        <note>catalytic; for integrase activity</note>
    </ligand>
</feature>
<feature type="binding site" evidence="1">
    <location>
        <position position="1267"/>
    </location>
    <ligand>
        <name>Mg(2+)</name>
        <dbReference type="ChEBI" id="CHEBI:18420"/>
        <label>3</label>
        <note>catalytic; for integrase activity</note>
    </ligand>
</feature>
<feature type="binding site" evidence="5">
    <location>
        <position position="1303"/>
    </location>
    <ligand>
        <name>Mg(2+)</name>
        <dbReference type="ChEBI" id="CHEBI:18420"/>
        <label>3</label>
        <note>catalytic; for integrase activity</note>
    </ligand>
</feature>
<feature type="site" description="Cleavage; by viral protease" evidence="1">
    <location>
        <begin position="132"/>
        <end position="133"/>
    </location>
</feature>
<feature type="site" description="Cis/trans isomerization of proline peptide bond; by human PPIA/CYPA" evidence="1">
    <location>
        <begin position="221"/>
        <end position="222"/>
    </location>
</feature>
<feature type="site" description="Cleavage; by viral protease" evidence="1">
    <location>
        <begin position="363"/>
        <end position="364"/>
    </location>
</feature>
<feature type="site" description="Cleavage; by viral protease" evidence="1">
    <location>
        <begin position="377"/>
        <end position="378"/>
    </location>
</feature>
<feature type="site" description="Cleavage; by viral protease" evidence="8">
    <location>
        <begin position="432"/>
        <end position="433"/>
    </location>
</feature>
<feature type="site" description="Cleavage; by viral protease" evidence="1">
    <location>
        <begin position="440"/>
        <end position="441"/>
    </location>
</feature>
<feature type="site" description="Cleavage; by viral protease" evidence="1">
    <location>
        <begin position="492"/>
        <end position="493"/>
    </location>
</feature>
<feature type="site" description="Cleavage; by viral protease" evidence="1">
    <location>
        <begin position="591"/>
        <end position="592"/>
    </location>
</feature>
<feature type="site" description="Essential for RT p66/p51 heterodimerization" evidence="1">
    <location>
        <position position="992"/>
    </location>
</feature>
<feature type="site" description="Essential for RT p66/p51 heterodimerization" evidence="1">
    <location>
        <position position="1005"/>
    </location>
</feature>
<feature type="site" description="Cleavage; by viral protease; partial" evidence="1">
    <location>
        <begin position="1031"/>
        <end position="1032"/>
    </location>
</feature>
<feature type="site" description="Cleavage; by viral protease" evidence="1">
    <location>
        <begin position="1151"/>
        <end position="1152"/>
    </location>
</feature>
<feature type="modified residue" description="Phosphotyrosine; by host" evidence="1">
    <location>
        <position position="132"/>
    </location>
</feature>
<feature type="lipid moiety-binding region" description="N-myristoyl glycine; by host" evidence="1">
    <location>
        <position position="2"/>
    </location>
</feature>
<feature type="strand" evidence="19">
    <location>
        <begin position="129"/>
        <end position="131"/>
    </location>
</feature>
<reference key="1">
    <citation type="submission" date="1988-12" db="EMBL/GenBank/DDBJ databases">
        <authorList>
            <person name="Koyanagi S."/>
            <person name="Chen I.S.Y."/>
        </authorList>
    </citation>
    <scope>NUCLEOTIDE SEQUENCE [GENOMIC RNA]</scope>
</reference>
<reference key="2">
    <citation type="journal article" date="1996" name="Curr. Top. Microbiol. Immunol.">
        <title>Proteolytic processing and particle maturation.</title>
        <authorList>
            <person name="Vogt V.M."/>
        </authorList>
    </citation>
    <scope>REVIEW</scope>
</reference>
<reference key="3">
    <citation type="journal article" date="1999" name="J. Mol. Biol.">
        <title>Structural biology of HIV.</title>
        <authorList>
            <person name="Turner B.G."/>
            <person name="Summers M.F."/>
        </authorList>
    </citation>
    <scope>REVIEW</scope>
</reference>
<reference key="4">
    <citation type="journal article" date="2001" name="Annu. Rev. Genet.">
        <title>Mechanisms of retroviral recombination.</title>
        <authorList>
            <person name="Negroni M."/>
            <person name="Buc H."/>
        </authorList>
    </citation>
    <scope>REVIEW</scope>
</reference>
<reference key="5">
    <citation type="journal article" date="2002" name="Genome Biol.">
        <title>Retroviral proteases.</title>
        <authorList>
            <person name="Dunn B.M."/>
            <person name="Goodenow M.M."/>
            <person name="Gustchina A."/>
            <person name="Wlodawer A."/>
        </authorList>
    </citation>
    <scope>REVIEW</scope>
</reference>
<reference key="6">
    <citation type="journal article" date="2003" name="Biochim. Biophys. Acta">
        <title>Role of HIV-1 Gag domains in viral assembly.</title>
        <authorList>
            <person name="Scarlata S."/>
            <person name="Carter C."/>
        </authorList>
    </citation>
    <scope>REVIEW</scope>
</reference>
<reference key="7">
    <citation type="journal article" date="2002" name="Structure">
        <title>Substrate shape determines specificity of recognition for HIV-1 protease: analysis of crystal structures of six substrate complexes.</title>
        <authorList>
            <person name="Prabu-Jeyabalan M."/>
            <person name="Nalivaika E.A."/>
            <person name="Schiffer C.A."/>
        </authorList>
    </citation>
    <scope>X-RAY CRYSTALLOGRAPHY (2.9 ANGSTROMS) OF 128-137 IN COMPLEX WITH SUBSTRATES</scope>
</reference>
<organism>
    <name type="scientific">Human immunodeficiency virus type 1 group M subtype B (isolate JRCSF)</name>
    <name type="common">HIV-1</name>
    <dbReference type="NCBI Taxonomy" id="11688"/>
    <lineage>
        <taxon>Viruses</taxon>
        <taxon>Riboviria</taxon>
        <taxon>Pararnavirae</taxon>
        <taxon>Artverviricota</taxon>
        <taxon>Revtraviricetes</taxon>
        <taxon>Ortervirales</taxon>
        <taxon>Retroviridae</taxon>
        <taxon>Orthoretrovirinae</taxon>
        <taxon>Lentivirus</taxon>
        <taxon>Human immunodeficiency virus type 1</taxon>
    </lineage>
</organism>
<dbReference type="EC" id="3.4.23.16"/>
<dbReference type="EC" id="2.7.7.49"/>
<dbReference type="EC" id="2.7.7.7"/>
<dbReference type="EC" id="3.1.26.13"/>
<dbReference type="EC" id="3.1.13.2"/>
<dbReference type="EC" id="2.7.7.-" evidence="5"/>
<dbReference type="EC" id="3.1.-.-" evidence="5"/>
<dbReference type="EMBL" id="M38429">
    <property type="protein sequence ID" value="AAB03745.1"/>
    <property type="status" value="ALT_SEQ"/>
    <property type="molecule type" value="Genomic_RNA"/>
</dbReference>
<dbReference type="PDB" id="1KJ4">
    <property type="method" value="X-ray"/>
    <property type="resolution" value="2.90 A"/>
    <property type="chains" value="P/S=128-137"/>
</dbReference>
<dbReference type="PDB" id="1KJ7">
    <property type="method" value="X-ray"/>
    <property type="resolution" value="2.00 A"/>
    <property type="chains" value="P=373-382"/>
</dbReference>
<dbReference type="PDB" id="1KJF">
    <property type="method" value="X-ray"/>
    <property type="resolution" value="2.00 A"/>
    <property type="chains" value="P=443-452"/>
</dbReference>
<dbReference type="PDBsum" id="1KJ4"/>
<dbReference type="PDBsum" id="1KJ7"/>
<dbReference type="PDBsum" id="1KJF"/>
<dbReference type="SMR" id="P20875"/>
<dbReference type="MEROPS" id="A02.001"/>
<dbReference type="EvolutionaryTrace" id="P20875"/>
<dbReference type="PRO" id="PR:P20875"/>
<dbReference type="Proteomes" id="UP000007695">
    <property type="component" value="Genome"/>
</dbReference>
<dbReference type="GO" id="GO:0043657">
    <property type="term" value="C:host cell"/>
    <property type="evidence" value="ECO:0007669"/>
    <property type="project" value="GOC"/>
</dbReference>
<dbReference type="GO" id="GO:0042025">
    <property type="term" value="C:host cell nucleus"/>
    <property type="evidence" value="ECO:0007669"/>
    <property type="project" value="UniProtKB-SubCell"/>
</dbReference>
<dbReference type="GO" id="GO:0020002">
    <property type="term" value="C:host cell plasma membrane"/>
    <property type="evidence" value="ECO:0007669"/>
    <property type="project" value="UniProtKB-SubCell"/>
</dbReference>
<dbReference type="GO" id="GO:0072494">
    <property type="term" value="C:host multivesicular body"/>
    <property type="evidence" value="ECO:0007669"/>
    <property type="project" value="UniProtKB-SubCell"/>
</dbReference>
<dbReference type="GO" id="GO:0016020">
    <property type="term" value="C:membrane"/>
    <property type="evidence" value="ECO:0007669"/>
    <property type="project" value="UniProtKB-KW"/>
</dbReference>
<dbReference type="GO" id="GO:0019013">
    <property type="term" value="C:viral nucleocapsid"/>
    <property type="evidence" value="ECO:0007669"/>
    <property type="project" value="UniProtKB-KW"/>
</dbReference>
<dbReference type="GO" id="GO:0055036">
    <property type="term" value="C:virion membrane"/>
    <property type="evidence" value="ECO:0007669"/>
    <property type="project" value="UniProtKB-SubCell"/>
</dbReference>
<dbReference type="GO" id="GO:0004190">
    <property type="term" value="F:aspartic-type endopeptidase activity"/>
    <property type="evidence" value="ECO:0007669"/>
    <property type="project" value="UniProtKB-KW"/>
</dbReference>
<dbReference type="GO" id="GO:0003677">
    <property type="term" value="F:DNA binding"/>
    <property type="evidence" value="ECO:0007669"/>
    <property type="project" value="UniProtKB-KW"/>
</dbReference>
<dbReference type="GO" id="GO:0003887">
    <property type="term" value="F:DNA-directed DNA polymerase activity"/>
    <property type="evidence" value="ECO:0007669"/>
    <property type="project" value="UniProtKB-KW"/>
</dbReference>
<dbReference type="GO" id="GO:0004533">
    <property type="term" value="F:exoribonuclease H activity"/>
    <property type="evidence" value="ECO:0007669"/>
    <property type="project" value="UniProtKB-EC"/>
</dbReference>
<dbReference type="GO" id="GO:0008289">
    <property type="term" value="F:lipid binding"/>
    <property type="evidence" value="ECO:0007669"/>
    <property type="project" value="UniProtKB-KW"/>
</dbReference>
<dbReference type="GO" id="GO:0035613">
    <property type="term" value="F:RNA stem-loop binding"/>
    <property type="evidence" value="ECO:0007669"/>
    <property type="project" value="TreeGrafter"/>
</dbReference>
<dbReference type="GO" id="GO:0003964">
    <property type="term" value="F:RNA-directed DNA polymerase activity"/>
    <property type="evidence" value="ECO:0007669"/>
    <property type="project" value="UniProtKB-KW"/>
</dbReference>
<dbReference type="GO" id="GO:0004523">
    <property type="term" value="F:RNA-DNA hybrid ribonuclease activity"/>
    <property type="evidence" value="ECO:0007669"/>
    <property type="project" value="InterPro"/>
</dbReference>
<dbReference type="GO" id="GO:0005198">
    <property type="term" value="F:structural molecule activity"/>
    <property type="evidence" value="ECO:0007669"/>
    <property type="project" value="InterPro"/>
</dbReference>
<dbReference type="GO" id="GO:0008270">
    <property type="term" value="F:zinc ion binding"/>
    <property type="evidence" value="ECO:0007669"/>
    <property type="project" value="UniProtKB-KW"/>
</dbReference>
<dbReference type="GO" id="GO:0015074">
    <property type="term" value="P:DNA integration"/>
    <property type="evidence" value="ECO:0007669"/>
    <property type="project" value="UniProtKB-KW"/>
</dbReference>
<dbReference type="GO" id="GO:0006310">
    <property type="term" value="P:DNA recombination"/>
    <property type="evidence" value="ECO:0007669"/>
    <property type="project" value="UniProtKB-KW"/>
</dbReference>
<dbReference type="GO" id="GO:0075713">
    <property type="term" value="P:establishment of integrated proviral latency"/>
    <property type="evidence" value="ECO:0007669"/>
    <property type="project" value="UniProtKB-KW"/>
</dbReference>
<dbReference type="GO" id="GO:0006508">
    <property type="term" value="P:proteolysis"/>
    <property type="evidence" value="ECO:0007669"/>
    <property type="project" value="UniProtKB-KW"/>
</dbReference>
<dbReference type="GO" id="GO:0046718">
    <property type="term" value="P:symbiont entry into host cell"/>
    <property type="evidence" value="ECO:0007669"/>
    <property type="project" value="UniProtKB-KW"/>
</dbReference>
<dbReference type="GO" id="GO:0052151">
    <property type="term" value="P:symbiont-mediated activation of host apoptosis"/>
    <property type="evidence" value="ECO:0007669"/>
    <property type="project" value="UniProtKB-KW"/>
</dbReference>
<dbReference type="GO" id="GO:0039657">
    <property type="term" value="P:symbiont-mediated suppression of host gene expression"/>
    <property type="evidence" value="ECO:0007669"/>
    <property type="project" value="UniProtKB-KW"/>
</dbReference>
<dbReference type="GO" id="GO:0044826">
    <property type="term" value="P:viral genome integration into host DNA"/>
    <property type="evidence" value="ECO:0007669"/>
    <property type="project" value="UniProtKB-KW"/>
</dbReference>
<dbReference type="GO" id="GO:0075732">
    <property type="term" value="P:viral penetration into host nucleus"/>
    <property type="evidence" value="ECO:0007669"/>
    <property type="project" value="UniProtKB-KW"/>
</dbReference>
<dbReference type="GO" id="GO:0075523">
    <property type="term" value="P:viral translational frameshifting"/>
    <property type="evidence" value="ECO:0007669"/>
    <property type="project" value="UniProtKB-KW"/>
</dbReference>
<dbReference type="CDD" id="cd05482">
    <property type="entry name" value="HIV_retropepsin_like"/>
    <property type="match status" value="1"/>
</dbReference>
<dbReference type="CDD" id="cd01645">
    <property type="entry name" value="RT_Rtv"/>
    <property type="match status" value="1"/>
</dbReference>
<dbReference type="FunFam" id="1.10.1200.30:FF:000001">
    <property type="entry name" value="Gag polyprotein"/>
    <property type="match status" value="1"/>
</dbReference>
<dbReference type="FunFam" id="1.10.150.90:FF:000001">
    <property type="entry name" value="Gag polyprotein"/>
    <property type="match status" value="1"/>
</dbReference>
<dbReference type="FunFam" id="1.10.375.10:FF:000001">
    <property type="entry name" value="Gag polyprotein"/>
    <property type="match status" value="1"/>
</dbReference>
<dbReference type="FunFam" id="1.20.5.760:FF:000001">
    <property type="entry name" value="Gag polyprotein"/>
    <property type="match status" value="1"/>
</dbReference>
<dbReference type="FunFam" id="4.10.60.10:FF:000001">
    <property type="entry name" value="Gag polyprotein"/>
    <property type="match status" value="1"/>
</dbReference>
<dbReference type="FunFam" id="2.40.70.10:FF:000001">
    <property type="entry name" value="Gag-Pol polyprotein"/>
    <property type="match status" value="1"/>
</dbReference>
<dbReference type="FunFam" id="3.30.420.10:FF:000025">
    <property type="entry name" value="Gag-Pol polyprotein"/>
    <property type="match status" value="1"/>
</dbReference>
<dbReference type="FunFam" id="3.30.420.10:FF:000017">
    <property type="entry name" value="POL polyprotein"/>
    <property type="match status" value="1"/>
</dbReference>
<dbReference type="FunFam" id="3.30.70.270:FF:000016">
    <property type="entry name" value="POL polyprotein"/>
    <property type="match status" value="1"/>
</dbReference>
<dbReference type="Gene3D" id="1.10.10.200">
    <property type="match status" value="1"/>
</dbReference>
<dbReference type="Gene3D" id="1.10.1200.30">
    <property type="match status" value="1"/>
</dbReference>
<dbReference type="Gene3D" id="3.30.70.270">
    <property type="match status" value="3"/>
</dbReference>
<dbReference type="Gene3D" id="2.40.70.10">
    <property type="entry name" value="Acid Proteases"/>
    <property type="match status" value="1"/>
</dbReference>
<dbReference type="Gene3D" id="3.10.10.10">
    <property type="entry name" value="HIV Type 1 Reverse Transcriptase, subunit A, domain 1"/>
    <property type="match status" value="1"/>
</dbReference>
<dbReference type="Gene3D" id="1.10.375.10">
    <property type="entry name" value="Human Immunodeficiency Virus Type 1 Capsid Protein"/>
    <property type="match status" value="1"/>
</dbReference>
<dbReference type="Gene3D" id="1.10.150.90">
    <property type="entry name" value="Immunodeficiency lentiviruses, gag gene matrix protein p17"/>
    <property type="match status" value="1"/>
</dbReference>
<dbReference type="Gene3D" id="2.30.30.10">
    <property type="entry name" value="Integrase, C-terminal domain superfamily, retroviral"/>
    <property type="match status" value="1"/>
</dbReference>
<dbReference type="Gene3D" id="3.30.420.10">
    <property type="entry name" value="Ribonuclease H-like superfamily/Ribonuclease H"/>
    <property type="match status" value="2"/>
</dbReference>
<dbReference type="Gene3D" id="1.20.5.760">
    <property type="entry name" value="Single helix bin"/>
    <property type="match status" value="1"/>
</dbReference>
<dbReference type="Gene3D" id="4.10.60.10">
    <property type="entry name" value="Zinc finger, CCHC-type"/>
    <property type="match status" value="1"/>
</dbReference>
<dbReference type="InterPro" id="IPR001969">
    <property type="entry name" value="Aspartic_peptidase_AS"/>
</dbReference>
<dbReference type="InterPro" id="IPR043502">
    <property type="entry name" value="DNA/RNA_pol_sf"/>
</dbReference>
<dbReference type="InterPro" id="IPR045345">
    <property type="entry name" value="Gag_p24_C"/>
</dbReference>
<dbReference type="InterPro" id="IPR017856">
    <property type="entry name" value="Integrase-like_N"/>
</dbReference>
<dbReference type="InterPro" id="IPR036862">
    <property type="entry name" value="Integrase_C_dom_sf_retrovir"/>
</dbReference>
<dbReference type="InterPro" id="IPR001037">
    <property type="entry name" value="Integrase_C_retrovir"/>
</dbReference>
<dbReference type="InterPro" id="IPR001584">
    <property type="entry name" value="Integrase_cat-core"/>
</dbReference>
<dbReference type="InterPro" id="IPR003308">
    <property type="entry name" value="Integrase_Zn-bd_dom_N"/>
</dbReference>
<dbReference type="InterPro" id="IPR000071">
    <property type="entry name" value="Lentvrl_matrix_N"/>
</dbReference>
<dbReference type="InterPro" id="IPR012344">
    <property type="entry name" value="Matrix_HIV/RSV_N"/>
</dbReference>
<dbReference type="InterPro" id="IPR001995">
    <property type="entry name" value="Peptidase_A2_cat"/>
</dbReference>
<dbReference type="InterPro" id="IPR021109">
    <property type="entry name" value="Peptidase_aspartic_dom_sf"/>
</dbReference>
<dbReference type="InterPro" id="IPR034170">
    <property type="entry name" value="Retropepsin-like_cat_dom"/>
</dbReference>
<dbReference type="InterPro" id="IPR018061">
    <property type="entry name" value="Retropepsins"/>
</dbReference>
<dbReference type="InterPro" id="IPR008916">
    <property type="entry name" value="Retrov_capsid_C"/>
</dbReference>
<dbReference type="InterPro" id="IPR008919">
    <property type="entry name" value="Retrov_capsid_N"/>
</dbReference>
<dbReference type="InterPro" id="IPR010999">
    <property type="entry name" value="Retrovr_matrix"/>
</dbReference>
<dbReference type="InterPro" id="IPR043128">
    <property type="entry name" value="Rev_trsase/Diguanyl_cyclase"/>
</dbReference>
<dbReference type="InterPro" id="IPR012337">
    <property type="entry name" value="RNaseH-like_sf"/>
</dbReference>
<dbReference type="InterPro" id="IPR002156">
    <property type="entry name" value="RNaseH_domain"/>
</dbReference>
<dbReference type="InterPro" id="IPR036397">
    <property type="entry name" value="RNaseH_sf"/>
</dbReference>
<dbReference type="InterPro" id="IPR000477">
    <property type="entry name" value="RT_dom"/>
</dbReference>
<dbReference type="InterPro" id="IPR010659">
    <property type="entry name" value="RVT_connect"/>
</dbReference>
<dbReference type="InterPro" id="IPR010661">
    <property type="entry name" value="RVT_thumb"/>
</dbReference>
<dbReference type="InterPro" id="IPR001878">
    <property type="entry name" value="Znf_CCHC"/>
</dbReference>
<dbReference type="InterPro" id="IPR036875">
    <property type="entry name" value="Znf_CCHC_sf"/>
</dbReference>
<dbReference type="PANTHER" id="PTHR41694">
    <property type="entry name" value="ENDOGENOUS RETROVIRUS GROUP K MEMBER POL PROTEIN"/>
    <property type="match status" value="1"/>
</dbReference>
<dbReference type="PANTHER" id="PTHR41694:SF3">
    <property type="entry name" value="RNA-DIRECTED DNA POLYMERASE-RELATED"/>
    <property type="match status" value="1"/>
</dbReference>
<dbReference type="Pfam" id="PF00540">
    <property type="entry name" value="Gag_p17"/>
    <property type="match status" value="1"/>
</dbReference>
<dbReference type="Pfam" id="PF19317">
    <property type="entry name" value="Gag_p24_C"/>
    <property type="match status" value="1"/>
</dbReference>
<dbReference type="Pfam" id="PF00552">
    <property type="entry name" value="IN_DBD_C"/>
    <property type="match status" value="1"/>
</dbReference>
<dbReference type="Pfam" id="PF02022">
    <property type="entry name" value="Integrase_Zn"/>
    <property type="match status" value="1"/>
</dbReference>
<dbReference type="Pfam" id="PF00075">
    <property type="entry name" value="RNase_H"/>
    <property type="match status" value="1"/>
</dbReference>
<dbReference type="Pfam" id="PF00665">
    <property type="entry name" value="rve"/>
    <property type="match status" value="1"/>
</dbReference>
<dbReference type="Pfam" id="PF00077">
    <property type="entry name" value="RVP"/>
    <property type="match status" value="1"/>
</dbReference>
<dbReference type="Pfam" id="PF00078">
    <property type="entry name" value="RVT_1"/>
    <property type="match status" value="1"/>
</dbReference>
<dbReference type="Pfam" id="PF06815">
    <property type="entry name" value="RVT_connect"/>
    <property type="match status" value="1"/>
</dbReference>
<dbReference type="Pfam" id="PF06817">
    <property type="entry name" value="RVT_thumb"/>
    <property type="match status" value="1"/>
</dbReference>
<dbReference type="Pfam" id="PF00098">
    <property type="entry name" value="zf-CCHC"/>
    <property type="match status" value="2"/>
</dbReference>
<dbReference type="PRINTS" id="PR00234">
    <property type="entry name" value="HIV1MATRIX"/>
</dbReference>
<dbReference type="SMART" id="SM00343">
    <property type="entry name" value="ZnF_C2HC"/>
    <property type="match status" value="2"/>
</dbReference>
<dbReference type="SUPFAM" id="SSF50630">
    <property type="entry name" value="Acid proteases"/>
    <property type="match status" value="1"/>
</dbReference>
<dbReference type="SUPFAM" id="SSF50122">
    <property type="entry name" value="DNA-binding domain of retroviral integrase"/>
    <property type="match status" value="1"/>
</dbReference>
<dbReference type="SUPFAM" id="SSF56672">
    <property type="entry name" value="DNA/RNA polymerases"/>
    <property type="match status" value="1"/>
</dbReference>
<dbReference type="SUPFAM" id="SSF46919">
    <property type="entry name" value="N-terminal Zn binding domain of HIV integrase"/>
    <property type="match status" value="1"/>
</dbReference>
<dbReference type="SUPFAM" id="SSF47836">
    <property type="entry name" value="Retroviral matrix proteins"/>
    <property type="match status" value="1"/>
</dbReference>
<dbReference type="SUPFAM" id="SSF47353">
    <property type="entry name" value="Retrovirus capsid dimerization domain-like"/>
    <property type="match status" value="1"/>
</dbReference>
<dbReference type="SUPFAM" id="SSF47943">
    <property type="entry name" value="Retrovirus capsid protein, N-terminal core domain"/>
    <property type="match status" value="1"/>
</dbReference>
<dbReference type="SUPFAM" id="SSF57756">
    <property type="entry name" value="Retrovirus zinc finger-like domains"/>
    <property type="match status" value="1"/>
</dbReference>
<dbReference type="SUPFAM" id="SSF53098">
    <property type="entry name" value="Ribonuclease H-like"/>
    <property type="match status" value="2"/>
</dbReference>
<dbReference type="PROSITE" id="PS50175">
    <property type="entry name" value="ASP_PROT_RETROV"/>
    <property type="match status" value="1"/>
</dbReference>
<dbReference type="PROSITE" id="PS00141">
    <property type="entry name" value="ASP_PROTEASE"/>
    <property type="match status" value="1"/>
</dbReference>
<dbReference type="PROSITE" id="PS50994">
    <property type="entry name" value="INTEGRASE"/>
    <property type="match status" value="1"/>
</dbReference>
<dbReference type="PROSITE" id="PS51027">
    <property type="entry name" value="INTEGRASE_DBD"/>
    <property type="match status" value="1"/>
</dbReference>
<dbReference type="PROSITE" id="PS50879">
    <property type="entry name" value="RNASE_H_1"/>
    <property type="match status" value="1"/>
</dbReference>
<dbReference type="PROSITE" id="PS50878">
    <property type="entry name" value="RT_POL"/>
    <property type="match status" value="1"/>
</dbReference>
<dbReference type="PROSITE" id="PS50158">
    <property type="entry name" value="ZF_CCHC"/>
    <property type="match status" value="2"/>
</dbReference>
<dbReference type="PROSITE" id="PS50876">
    <property type="entry name" value="ZF_INTEGRASE"/>
    <property type="match status" value="1"/>
</dbReference>
<protein>
    <recommendedName>
        <fullName>Gag-Pol polyprotein</fullName>
    </recommendedName>
    <alternativeName>
        <fullName>Pr160Gag-Pol</fullName>
    </alternativeName>
    <component>
        <recommendedName>
            <fullName>Matrix protein p17</fullName>
            <shortName>MA</shortName>
        </recommendedName>
    </component>
    <component>
        <recommendedName>
            <fullName>Capsid protein p24</fullName>
            <shortName>CA</shortName>
        </recommendedName>
    </component>
    <component>
        <recommendedName>
            <fullName evidence="7">Spacer peptide 1</fullName>
            <shortName>SP1</shortName>
        </recommendedName>
        <alternativeName>
            <fullName>p2</fullName>
        </alternativeName>
    </component>
    <component>
        <recommendedName>
            <fullName>Nucleocapsid protein p7</fullName>
            <shortName>NC</shortName>
        </recommendedName>
    </component>
    <component>
        <recommendedName>
            <fullName>Transframe peptide</fullName>
            <shortName>TF</shortName>
        </recommendedName>
    </component>
    <component>
        <recommendedName>
            <fullName>p6-pol</fullName>
            <shortName>p6*</shortName>
        </recommendedName>
    </component>
    <component>
        <recommendedName>
            <fullName>Protease</fullName>
            <ecNumber>3.4.23.16</ecNumber>
        </recommendedName>
        <alternativeName>
            <fullName>PR</fullName>
        </alternativeName>
        <alternativeName>
            <fullName>Retropepsin</fullName>
        </alternativeName>
    </component>
    <component>
        <recommendedName>
            <fullName>Reverse transcriptase/ribonuclease H</fullName>
            <ecNumber>2.7.7.49</ecNumber>
            <ecNumber>2.7.7.7</ecNumber>
            <ecNumber>3.1.26.13</ecNumber>
        </recommendedName>
        <alternativeName>
            <fullName>Exoribonuclease H</fullName>
            <ecNumber>3.1.13.2</ecNumber>
        </alternativeName>
        <alternativeName>
            <fullName>p66 RT</fullName>
        </alternativeName>
    </component>
    <component>
        <recommendedName>
            <fullName>p51 RT</fullName>
        </recommendedName>
    </component>
    <component>
        <recommendedName>
            <fullName>p15</fullName>
        </recommendedName>
    </component>
    <component>
        <recommendedName>
            <fullName>Integrase</fullName>
            <shortName>IN</shortName>
            <ecNumber evidence="5">2.7.7.-</ecNumber>
            <ecNumber evidence="5">3.1.-.-</ecNumber>
        </recommendedName>
    </component>
</protein>
<name>POL_HV1JR</name>
<comment type="function">
    <molecule>Gag-Pol polyprotein</molecule>
    <text evidence="1">Mediates, with Gag polyprotein, the essential events in virion assembly, including binding the plasma membrane, making the protein-protein interactions necessary to create spherical particles, recruiting the viral Env proteins, and packaging the genomic RNA via direct interactions with the RNA packaging sequence (Psi). Gag-Pol polyprotein may regulate its own translation, by the binding genomic RNA in the 5'-UTR. At low concentration, the polyprotein would promote translation, whereas at high concentration, the polyprotein would encapsidate genomic RNA and then shut off translation.</text>
</comment>
<comment type="function">
    <molecule>Matrix protein p17</molecule>
    <text evidence="7">Targets the polyprotein to the plasma membrane via a multipartite membrane-binding signal, that includes its myristoylated N-terminus. Matrix protein is part of the pre-integration complex. Implicated in the release from host cell mediated by Vpu. Binds to RNA.</text>
</comment>
<comment type="function">
    <molecule>Capsid protein p24</molecule>
    <text evidence="5 7">Forms the conical core that encapsulates the genomic RNA-nucleocapsid complex in the virion. Most core are conical, with only 7% tubular. The core is constituted by capsid protein hexamer subunits. The core is disassembled soon after virion entry (By similarity). Host restriction factors such as TRIM5-alpha or TRIMCyp bind retroviral capsids and cause premature capsid disassembly, leading to blocks in reverse transcription. Capsid restriction by TRIM5 is one of the factors which restricts HIV-1 to the human species. Host PIN1 apparently facilitates the virion uncoating. On the other hand, interactions with PDZD8 or CYPA stabilize the capsid.</text>
</comment>
<comment type="function">
    <molecule>Nucleocapsid protein p7</molecule>
    <text evidence="5">Encapsulates and protects viral dimeric unspliced genomic RNA (gRNA). Binds these RNAs through its zinc fingers. Acts as a nucleic acid chaperone which is involved in rearangement of nucleic acid secondary structure during gRNA retrotranscription. Also facilitates template switch leading to recombination. As part of the polyprotein, participates in gRNA dimerization, packaging, tRNA incorporation and virion assembly.</text>
</comment>
<comment type="function">
    <molecule>Protease</molecule>
    <text evidence="5 10">Aspartyl protease that mediates proteolytic cleavages of Gag and Gag-Pol polyproteins during or shortly after the release of the virion from the plasma membrane. Cleavages take place as an ordered, step-wise cascade to yield mature proteins. This process is called maturation. Displays maximal activity during the budding process just prior to particle release from the cell. Also cleaves Nef and Vif, probably concomitantly with viral structural proteins on maturation of virus particles. Hydrolyzes host EIF4GI and PABP1 in order to shut off the capped cellular mRNA translation. The resulting inhibition of cellular protein synthesis serves to ensure maximal viral gene expression and to evade host immune response. Also mediates cleavage of host YTHDF3. Mediates cleavage of host CARD8, thereby activating the CARD8 inflammasome, leading to the clearance of latent HIV-1 in patient CD4(+) T-cells after viral reactivation; in contrast, HIV-1 can evade CARD8-sensing when its protease remains inactive in infected cells prior to viral budding (By similarity).</text>
</comment>
<comment type="function">
    <molecule>Reverse transcriptase/ribonuclease H</molecule>
    <text evidence="5">Multifunctional enzyme that converts the viral RNA genome into dsDNA in the cytoplasm, shortly after virus entry into the cell. This enzyme displays a DNA polymerase activity that can copy either DNA or RNA templates, and a ribonuclease H (RNase H) activity that cleaves the RNA strand of RNA-DNA heteroduplexes in a partially processive 3' to 5' endonucleasic mode. Conversion of viral genomic RNA into dsDNA requires many steps. A tRNA(3)-Lys binds to the primer-binding site (PBS) situated at the 5'-end of the viral RNA. RT uses the 3' end of the tRNA primer to perform a short round of RNA-dependent minus-strand DNA synthesis. The reading proceeds through the U5 region and ends after the repeated (R) region which is present at both ends of viral RNA. The portion of the RNA-DNA heteroduplex is digested by the RNase H, resulting in a ssDNA product attached to the tRNA primer. This ssDNA/tRNA hybridizes with the identical R region situated at the 3' end of viral RNA. This template exchange, known as minus-strand DNA strong stop transfer, can be either intra- or intermolecular. RT uses the 3' end of this newly synthesized short ssDNA to perform the RNA-dependent minus-strand DNA synthesis of the whole template. RNase H digests the RNA template except for two polypurine tracts (PPTs) situated at the 5'-end and near the center of the genome. It is not clear if both polymerase and RNase H activities are simultaneous. RNase H probably can proceed both in a polymerase-dependent (RNA cut into small fragments by the same RT performing DNA synthesis) and a polymerase-independent mode (cleavage of remaining RNA fragments by free RTs). Secondly, RT performs DNA-directed plus-strand DNA synthesis using the PPTs that have not been removed by RNase H as primers. PPTs and tRNA primers are then removed by RNase H. The 3' and 5' ssDNA PBS regions hybridize to form a circular dsDNA intermediate. Strand displacement synthesis by RT to the PBS and PPT ends produces a blunt ended, linear dsDNA copy of the viral genome that includes long terminal repeats (LTRs) at both ends.</text>
</comment>
<comment type="function">
    <molecule>Integrase</molecule>
    <text evidence="5">Catalyzes viral DNA integration into the host chromosome, by performing a series of DNA cutting and joining reactions. This enzyme activity takes place after virion entry into a cell and reverse transcription of the RNA genome in dsDNA. The first step in the integration process is 3' processing. This step requires a complex comprising the viral genome, matrix protein, Vpr and integrase. This complex is called the pre-integration complex (PIC). The integrase protein removes 2 nucleotides from each 3' end of the viral DNA, leaving recessed CA OH's at the 3' ends. In the second step, the PIC enters cell nucleus. This process is mediated through integrase and Vpr proteins, and allows the virus to infect a non dividing cell. This ability to enter the nucleus is specific of lentiviruses, other retroviruses cannot and rely on cell division to access cell chromosomes. In the third step, termed strand transfer, the integrase protein joins the previously processed 3' ends to the 5' ends of strands of target cellular DNA at the site of integration. The 5'-ends are produced by integrase-catalyzed staggered cuts, 5 bp apart. A Y-shaped, gapped, recombination intermediate results, with the 5'-ends of the viral DNA strands and the 3' ends of target DNA strands remaining unjoined, flanking a gap of 5 bp. The last step is viral DNA integration into host chromosome. This involves host DNA repair synthesis in which the 5 bp gaps between the unjoined strands are filled in and then ligated. Since this process occurs at both cuts flanking the HIV genome, a 5 bp duplication of host DNA is produced at the ends of HIV-1 integration. Alternatively, Integrase may catalyze the excision of viral DNA just after strand transfer, this is termed disintegration.</text>
</comment>
<comment type="catalytic activity">
    <reaction evidence="10">
        <text>Specific for a P1 residue that is hydrophobic, and P1' variable, but often Pro.</text>
        <dbReference type="EC" id="3.4.23.16"/>
    </reaction>
</comment>
<comment type="catalytic activity">
    <reaction evidence="1">
        <text>Endohydrolysis of RNA in RNA/DNA hybrids. Three different cleavage modes: 1. sequence-specific internal cleavage of RNA. Human immunodeficiency virus type 1 and Moloney murine leukemia virus enzymes prefer to cleave the RNA strand one nucleotide away from the RNA-DNA junction. 2. RNA 5'-end directed cleavage 13-19 nucleotides from the RNA end. 3. DNA 3'-end directed cleavage 15-20 nucleotides away from the primer terminus.</text>
        <dbReference type="EC" id="3.1.26.13"/>
    </reaction>
</comment>
<comment type="catalytic activity">
    <reaction evidence="1">
        <text>3'-end directed exonucleolytic cleavage of viral RNA-DNA hybrid.</text>
        <dbReference type="EC" id="3.1.13.2"/>
    </reaction>
</comment>
<comment type="catalytic activity">
    <reaction evidence="11">
        <text>DNA(n) + a 2'-deoxyribonucleoside 5'-triphosphate = DNA(n+1) + diphosphate</text>
        <dbReference type="Rhea" id="RHEA:22508"/>
        <dbReference type="Rhea" id="RHEA-COMP:17339"/>
        <dbReference type="Rhea" id="RHEA-COMP:17340"/>
        <dbReference type="ChEBI" id="CHEBI:33019"/>
        <dbReference type="ChEBI" id="CHEBI:61560"/>
        <dbReference type="ChEBI" id="CHEBI:173112"/>
        <dbReference type="EC" id="2.7.7.49"/>
    </reaction>
</comment>
<comment type="catalytic activity">
    <reaction evidence="11">
        <text>DNA(n) + a 2'-deoxyribonucleoside 5'-triphosphate = DNA(n+1) + diphosphate</text>
        <dbReference type="Rhea" id="RHEA:22508"/>
        <dbReference type="Rhea" id="RHEA-COMP:17339"/>
        <dbReference type="Rhea" id="RHEA-COMP:17340"/>
        <dbReference type="ChEBI" id="CHEBI:33019"/>
        <dbReference type="ChEBI" id="CHEBI:61560"/>
        <dbReference type="ChEBI" id="CHEBI:173112"/>
        <dbReference type="EC" id="2.7.7.7"/>
    </reaction>
</comment>
<comment type="cofactor">
    <cofactor evidence="1">
        <name>Mg(2+)</name>
        <dbReference type="ChEBI" id="CHEBI:18420"/>
    </cofactor>
    <text evidence="1">Binds 2 magnesium ions for reverse transcriptase polymerase activity.</text>
</comment>
<comment type="cofactor">
    <cofactor evidence="1">
        <name>Mg(2+)</name>
        <dbReference type="ChEBI" id="CHEBI:18420"/>
    </cofactor>
    <text evidence="1">Binds 2 magnesium ions for ribonuclease H (RNase H) activity. Substrate-binding is a precondition for magnesium binding.</text>
</comment>
<comment type="cofactor">
    <cofactor evidence="1">
        <name>Mg(2+)</name>
        <dbReference type="ChEBI" id="CHEBI:18420"/>
    </cofactor>
    <text evidence="1">Magnesium ions are required for integrase activity. Binds at least 1, maybe 2 magnesium ions.</text>
</comment>
<comment type="activity regulation">
    <text evidence="1">Protease: The viral protease is inhibited by many synthetic protease inhibitors (PIs), such as amprenavir, atazanavir, indinavir, loprinavir, nelfinavir, ritonavir and saquinavir. Use of protease inhibitors in tritherapy regimens permit more ambitious therapeutic strategies. Reverse transcriptase/ribonuclease H: RT can be inhibited either by nucleoside RT inhibitors (NRTIs) or by non nucleoside RT inhibitors (NNRTIs). NRTIs act as chain terminators, whereas NNRTIs inhibit DNA polymerization by binding a small hydrophobic pocket near the RT active site and inducing an allosteric change in this region. Classical NRTIs are abacavir, adefovir (PMEA), didanosine (ddI), lamivudine (3TC), stavudine (d4T), tenofovir (PMPA), zalcitabine (ddC), and zidovudine (AZT). Classical NNRTIs are atevirdine (BHAP U-87201E), delavirdine, efavirenz (DMP-266), emivirine (I-EBU), and nevirapine (BI-RG-587). The tritherapies used as a basic effective treatment of AIDS associate two NRTIs and one NNRTI.</text>
</comment>
<comment type="subunit">
    <molecule>Matrix protein p17</molecule>
    <text evidence="5 7">Homotrimer; further assembles as hexamers of trimers (By similarity). Interacts with gp41 (via C-terminus) (By similarity). Interacts with host CALM1; this interaction induces a conformational change in the Matrix protein, triggering exposure of the myristate group (By similarity). Interacts with host AP3D1; this interaction allows the polyprotein trafficking to multivesicular bodies during virus assembly (By similarity). Part of the pre-integration complex (PIC) which is composed of viral genome, matrix protein, Vpr and integrase (By similarity).</text>
</comment>
<comment type="subunit">
    <molecule>Capsid protein p24</molecule>
    <text evidence="5 7">Homodimer; the homodimer further multimerizes as homohexamers or homopentamers. Interacts with human PPIA/CYPA (By similarity); This interaction stabilizes the capsid. Interacts with human NUP153 (By similarity). Interacts with host PDZD8; this interaction stabilizes the capsid (By similarity). Interacts with monkey TRIM5; this interaction destabilizes the capsid (By similarity).</text>
</comment>
<comment type="subunit">
    <molecule>Protease</molecule>
    <text evidence="5 7">Homodimer, whose active site consists of two apposed aspartic acid residues.</text>
</comment>
<comment type="subunit">
    <molecule>Reverse transcriptase/ribonuclease H</molecule>
    <text evidence="3">Heterodimer of p66 RT and p51 RT (RT p66/p51) (By similarity). Heterodimerization of RT is essential for DNA polymerase activity (By similarity). The overall folding of the subdomains is similar in p66 RT and p51 RT but the spatial arrangements of the subdomains are dramatically different (By similarity).</text>
</comment>
<comment type="subunit">
    <molecule>Integrase</molecule>
    <text evidence="4 5 7">Homotetramer; may further associate as a homohexadecamer (By similarity). Part of the pre-integration complex (PIC) which is composed of viral genome, matrix protein, Vpr and integrase. Interacts with human SMARCB1/INI1 and human PSIP1/LEDGF isoform 1. Interacts with human KPNA3; this interaction might play a role in nuclear import of the pre-integration complex (By similarity). Interacts with human NUP153; this interaction might play a role in nuclear import of the pre-integration complex (By similarity).</text>
</comment>
<comment type="subcellular location">
    <molecule>Gag-Pol polyprotein</molecule>
    <subcellularLocation>
        <location>Host cell membrane</location>
        <topology>Lipid-anchor</topology>
    </subcellularLocation>
    <subcellularLocation>
        <location>Host endosome</location>
        <location>Host multivesicular body</location>
    </subcellularLocation>
    <text evidence="7">These locations are linked to virus assembly sites. The main location is the cell membrane, but under some circumstances, late endosomal compartments can serve as productive sites for virion assembly.</text>
</comment>
<comment type="subcellular location">
    <molecule>Matrix protein p17</molecule>
    <subcellularLocation>
        <location>Virion membrane</location>
        <topology evidence="18">Lipid-anchor</topology>
    </subcellularLocation>
    <subcellularLocation>
        <location evidence="1">Host nucleus</location>
    </subcellularLocation>
    <subcellularLocation>
        <location evidence="1">Host cytoplasm</location>
    </subcellularLocation>
</comment>
<comment type="subcellular location">
    <molecule>Capsid protein p24</molecule>
    <subcellularLocation>
        <location evidence="18">Virion</location>
    </subcellularLocation>
</comment>
<comment type="subcellular location">
    <molecule>Nucleocapsid protein p7</molecule>
    <subcellularLocation>
        <location evidence="18">Virion</location>
    </subcellularLocation>
</comment>
<comment type="subcellular location">
    <molecule>Reverse transcriptase/ribonuclease H</molecule>
    <subcellularLocation>
        <location evidence="18">Virion</location>
    </subcellularLocation>
</comment>
<comment type="subcellular location">
    <molecule>Integrase</molecule>
    <subcellularLocation>
        <location evidence="18">Virion</location>
    </subcellularLocation>
    <subcellularLocation>
        <location evidence="18">Host nucleus</location>
    </subcellularLocation>
    <subcellularLocation>
        <location evidence="18">Host cytoplasm</location>
    </subcellularLocation>
    <text evidence="18">Nuclear at initial phase, cytoplasmic at assembly.</text>
</comment>
<comment type="alternative products">
    <event type="ribosomal frameshifting"/>
    <isoform>
        <id>P20875-1</id>
        <name>Gag-Pol polyprotein</name>
        <sequence type="displayed"/>
    </isoform>
    <isoform>
        <id>P20873-1</id>
        <name>Gag polyprotein</name>
        <sequence type="external"/>
    </isoform>
    <text>Translation results in the formation of the Gag polyprotein most of the time. Ribosomal frameshifting at the gag-pol genes boundary occurs at low frequency and produces the Gag-Pol polyprotein. This strategy of translation probably allows the virus to modulate the quantity of each viral protein. Maintenance of a correct Gag to Gag-Pol ratio is essential for RNA dimerization and viral infectivity.</text>
</comment>
<comment type="domain">
    <molecule>Reverse transcriptase/ribonuclease H</molecule>
    <text evidence="1">RT is structured in five subdomains: finger, palm, thumb, connection and RNase H. Within the palm subdomain, the 'primer grip' region is thought to be involved in the positioning of the primer terminus for accommodating the incoming nucleotide. The RNase H domain stabilizes the association of RT with primer-template.</text>
</comment>
<comment type="domain">
    <molecule>Reverse transcriptase/ribonuclease H</molecule>
    <text evidence="1">The tryptophan repeat motif is involved in RT p66/p51 dimerization (By similarity).</text>
</comment>
<comment type="domain">
    <molecule>Integrase</molecule>
    <text evidence="1">The core domain contains the D-x(n)-D-x(35)-E motif, named for the phylogenetically conserved glutamic acid and aspartic acid residues and the invariant 35 amino acid spacing between the second and third acidic residues. Each acidic residue of the D,D(35)E motif is independently essential for the 3'-processing and strand transfer activities of purified integrase protein.</text>
</comment>
<comment type="PTM">
    <molecule>Gag-Pol polyprotein</molecule>
    <text evidence="5 11">Specific enzymatic cleavages by the viral protease yield mature proteins. The protease is released by autocatalytic cleavage. The polyprotein is cleaved during and after budding, this process is termed maturation. Proteolytic cleavage of p66 RT removes the RNase H domain to yield the p51 RT subunit. Nucleocapsid protein p7 might be further cleaved after virus entry.</text>
</comment>
<comment type="PTM">
    <molecule>Matrix protein p17</molecule>
    <text evidence="5">Tyrosine phosphorylated presumably in the virion by a host kinase. Phosphorylation is apparently not a major regulator of membrane association.</text>
</comment>
<comment type="PTM">
    <molecule>Capsid protein p24</molecule>
    <text evidence="6">Phosphorylated possibly by host MAPK1; this phosphorylation is necessary for Pin1-mediated virion uncoating.</text>
</comment>
<comment type="PTM">
    <molecule>Nucleocapsid protein p7</molecule>
    <text evidence="2">Methylated by host PRMT6, impairing its function by reducing RNA annealing and the initiation of reverse transcription.</text>
</comment>
<comment type="miscellaneous">
    <molecule>Reverse transcriptase/ribonuclease H</molecule>
    <text evidence="1">Error-prone enzyme that lacks a proof-reading function. High mutations rate is a direct consequence of this characteristic. RT also displays frequent template switching leading to high recombination rate. Recombination mostly occurs between homologous regions of the two copackaged RNA genomes. If these two RNA molecules derive from different viral strains, reverse transcription will give rise to highly recombinated proviral DNAs.</text>
</comment>
<comment type="miscellaneous">
    <text>HIV-1 lineages are divided in three main groups, M (for Major), O (for Outlier), and N (for New, or Non-M, Non-O). The vast majority of strains found worldwide belong to the group M. Group O seems to be endemic to and largely confined to Cameroon and neighboring countries in West Central Africa, where these viruses represent a small minority of HIV-1 strains. The group N is represented by a limited number of isolates from Cameroonian persons. The group M is further subdivided in 9 clades or subtypes (A to D, F to H, J and K).</text>
</comment>
<comment type="miscellaneous">
    <text>Resistance to inhibitors associated with mutations are observed both in viral protease and in reverse transcriptase. Most of the time, single mutations confer only a modest reduction in drug susceptibility. Combination of several mutations is usually required to develop a high-level drug resistance. These mutations are predominantly found in clade B viruses and not in other genotypes. They are listed in the clade B representative isolate HXB2 (AC P04585).</text>
</comment>
<comment type="miscellaneous">
    <molecule>Isoform Gag-Pol polyprotein</molecule>
    <text>Produced by -1 ribosomal frameshifting.</text>
</comment>
<comment type="online information" name="HIV drug resistance mutations">
    <link uri="https://www.iasusa.org/hiv-drug-resistance/hiv-drug-resistance-mutations/"/>
</comment>
<comment type="online information" name="hivdb">
    <link uri="https://hivdb.stanford.edu"/>
    <text>HIV drug resistance database</text>
</comment>
<accession>P20875</accession>
<keyword id="KW-0002">3D-structure</keyword>
<keyword id="KW-1073">Activation of host caspases by virus</keyword>
<keyword id="KW-0014">AIDS</keyword>
<keyword id="KW-0064">Aspartyl protease</keyword>
<keyword id="KW-0167">Capsid protein</keyword>
<keyword id="KW-0229">DNA integration</keyword>
<keyword id="KW-0233">DNA recombination</keyword>
<keyword id="KW-0238">DNA-binding</keyword>
<keyword id="KW-0239">DNA-directed DNA polymerase</keyword>
<keyword id="KW-0255">Endonuclease</keyword>
<keyword id="KW-1262">Eukaryotic host gene expression shutoff by virus</keyword>
<keyword id="KW-1193">Eukaryotic host translation shutoff by virus</keyword>
<keyword id="KW-1032">Host cell membrane</keyword>
<keyword id="KW-1035">Host cytoplasm</keyword>
<keyword id="KW-1039">Host endosome</keyword>
<keyword id="KW-1190">Host gene expression shutoff by virus</keyword>
<keyword id="KW-1043">Host membrane</keyword>
<keyword id="KW-1048">Host nucleus</keyword>
<keyword id="KW-0945">Host-virus interaction</keyword>
<keyword id="KW-0378">Hydrolase</keyword>
<keyword id="KW-0446">Lipid-binding</keyword>
<keyword id="KW-0449">Lipoprotein</keyword>
<keyword id="KW-0460">Magnesium</keyword>
<keyword id="KW-0472">Membrane</keyword>
<keyword id="KW-0479">Metal-binding</keyword>
<keyword id="KW-1119">Modulation of host cell apoptosis by virus</keyword>
<keyword id="KW-0511">Multifunctional enzyme</keyword>
<keyword id="KW-0519">Myristate</keyword>
<keyword id="KW-0540">Nuclease</keyword>
<keyword id="KW-0548">Nucleotidyltransferase</keyword>
<keyword id="KW-0597">Phosphoprotein</keyword>
<keyword id="KW-0645">Protease</keyword>
<keyword id="KW-0677">Repeat</keyword>
<keyword id="KW-0688">Ribosomal frameshifting</keyword>
<keyword id="KW-0694">RNA-binding</keyword>
<keyword id="KW-0695">RNA-directed DNA polymerase</keyword>
<keyword id="KW-0808">Transferase</keyword>
<keyword id="KW-1179">Viral genome integration</keyword>
<keyword id="KW-0543">Viral nucleoprotein</keyword>
<keyword id="KW-1163">Viral penetration into host nucleus</keyword>
<keyword id="KW-1188">Viral release from host cell</keyword>
<keyword id="KW-0946">Virion</keyword>
<keyword id="KW-0917">Virion maturation</keyword>
<keyword id="KW-1160">Virus entry into host cell</keyword>
<keyword id="KW-0862">Zinc</keyword>
<keyword id="KW-0863">Zinc-finger</keyword>
<organismHost>
    <name type="scientific">Homo sapiens</name>
    <name type="common">Human</name>
    <dbReference type="NCBI Taxonomy" id="9606"/>
</organismHost>
<gene>
    <name type="primary">gag-pol</name>
</gene>
<sequence>MGARASVLSGGELDRWEKIRLRPGGKKKYRLKHIVWASRELERFAVNPGLLESSEGCRQILGQLQPSLKTGSEELTSLYNTVATLYCVHQRIEIKDTKEALEKIEEEQTKSMKKAQQAAADTGNSSQVSQNYPIVQNLQGQMVHQAISPRTLNAWVKVIEEKAFSPEVIPMFSALSEGATPQDLNTMLNTVGGHQAAMQMLKETINEEAAEWDRLHPVHAGPIAPGQMREPRGSDIAGTTSTLQEQIGWMTNNPPIPVGEIYKRWIILGLNKIVRMYSPVSILDIRQGPKEPFRDYVDRFYKTLRAEQATQEVKNWMTETLLVQNANPDCKTILKALGPAATLEEMMTACQGVGGPGHKARVLAEAMSQVTNPATIMMQRGNFRNQRKNVKCFNCGKEGHIARNCRAPRKKGCWKCGKEGHQMKECTERQANFLREDLAFLQGKAREFPSEQTRANSPTRRELQVWGRDSNSLSEAGAEAGADRQGIVSFNFPQITLWQRPLVTIKIGGQLKEALLDTGADDTVLEDMDLPGRWKPKMIGGIGGFIKVRQYDQIPIDICGHKAVGTVLVGPTPVNIIGRNLLTQIGCTLNFPISPIETVPVKLKPGMDGPKVKQWPLTEEKIKALVEICTEMEKEGKISKIGPENPYNTPVFAIKKKDSTKWRKLVDFRELNRRTQDFWEVQLGIPHPAGLKKKKSVTVLDVGDAYFSVPLDKDFRKYTAFTIPSINNETPGIRYQYNVLPQGWKGSPAIFQSSMTKILEPFRKQNPDIIIYQYMDDLYVGSDLEIGQHRTKIEELRQHLLKWGFTTPDKKHQKEPPFLWMGYELHPDKWTVQPIVLPEKDSWTVNDIQKLVGKLNWASQIYAGIKVKQLCKLLRGTKALTEVIPLTKEAELELAENREILKEPVHGVYYDPSKDLIVEIQKQGQGQWTYQIFQEPFKNLKTGKYARTRGAHTNDVKQLTEAVQKIANESIVIWGKIPKFKLPIQKETWETWWTEYWQATWIPEWEFVNTPPLVKLWYQLEKEPIVGAETFYVDGAANRETKLGKAGYVTSRGRQKVVSLTDTTNQKTELQAIHLALQDSGLEVNIVTDSQYALGIIQAQPDKSESELVSQIIEQLIKKEKVYLAWVPAHKGIGGNEQVDKLVSAGIRKVLFLDGIDKAQEDHEKYHSNWRAMASDFNLPPIVAKEIVASCDKCQLKGEAMHGQVDCSPGIWQLDCTHLEGKIILVAVHVASGYIEAEVIPAETGQETAYFLLKLAGRWPVTTIHTDNGSNFTSTTVKAACWWAGIKQEFGIPYNPQSQGVVESMNKELKKIIGQVRDQAEHLKTAVQMAVFIHNFKRKGGIGGYSAGERIIDIIATDIQTKELQKQITKIQNFRVYYRDNRDPIWKGPAKLLWKGEGAVVIQDNSDIKVVPRRKVKIIRDYGKQMAGDDCVASRQDED</sequence>
<proteinExistence type="evidence at protein level"/>
<evidence type="ECO:0000250" key="1"/>
<evidence type="ECO:0000250" key="2">
    <source>
        <dbReference type="UniProtKB" id="P03347"/>
    </source>
</evidence>
<evidence type="ECO:0000250" key="3">
    <source>
        <dbReference type="UniProtKB" id="P03366"/>
    </source>
</evidence>
<evidence type="ECO:0000250" key="4">
    <source>
        <dbReference type="UniProtKB" id="P03367"/>
    </source>
</evidence>
<evidence type="ECO:0000250" key="5">
    <source>
        <dbReference type="UniProtKB" id="P04585"/>
    </source>
</evidence>
<evidence type="ECO:0000250" key="6">
    <source>
        <dbReference type="UniProtKB" id="P12493"/>
    </source>
</evidence>
<evidence type="ECO:0000250" key="7">
    <source>
        <dbReference type="UniProtKB" id="P12497"/>
    </source>
</evidence>
<evidence type="ECO:0000255" key="8"/>
<evidence type="ECO:0000255" key="9">
    <source>
        <dbReference type="PROSITE-ProRule" id="PRU00047"/>
    </source>
</evidence>
<evidence type="ECO:0000255" key="10">
    <source>
        <dbReference type="PROSITE-ProRule" id="PRU00275"/>
    </source>
</evidence>
<evidence type="ECO:0000255" key="11">
    <source>
        <dbReference type="PROSITE-ProRule" id="PRU00405"/>
    </source>
</evidence>
<evidence type="ECO:0000255" key="12">
    <source>
        <dbReference type="PROSITE-ProRule" id="PRU00408"/>
    </source>
</evidence>
<evidence type="ECO:0000255" key="13">
    <source>
        <dbReference type="PROSITE-ProRule" id="PRU00450"/>
    </source>
</evidence>
<evidence type="ECO:0000255" key="14">
    <source>
        <dbReference type="PROSITE-ProRule" id="PRU00457"/>
    </source>
</evidence>
<evidence type="ECO:0000255" key="15">
    <source>
        <dbReference type="PROSITE-ProRule" id="PRU00506"/>
    </source>
</evidence>
<evidence type="ECO:0000255" key="16">
    <source>
        <dbReference type="PROSITE-ProRule" id="PRU10094"/>
    </source>
</evidence>
<evidence type="ECO:0000256" key="17">
    <source>
        <dbReference type="SAM" id="MobiDB-lite"/>
    </source>
</evidence>
<evidence type="ECO:0000305" key="18"/>
<evidence type="ECO:0007829" key="19">
    <source>
        <dbReference type="PDB" id="1KJ4"/>
    </source>
</evidence>